<protein>
    <recommendedName>
        <fullName evidence="4">Transcription factor zip-11</fullName>
    </recommendedName>
    <alternativeName>
        <fullName evidence="7">BZIP transcription factor family zip-11</fullName>
    </alternativeName>
</protein>
<accession>Q9N5A8</accession>
<dbReference type="EMBL" id="BX284604">
    <property type="protein sequence ID" value="CCD74009.1"/>
    <property type="molecule type" value="Genomic_DNA"/>
</dbReference>
<dbReference type="RefSeq" id="NP_500318.1">
    <property type="nucleotide sequence ID" value="NM_067917.6"/>
</dbReference>
<dbReference type="SMR" id="Q9N5A8"/>
<dbReference type="FunCoup" id="Q9N5A8">
    <property type="interactions" value="224"/>
</dbReference>
<dbReference type="IntAct" id="Q9N5A8">
    <property type="interactions" value="6"/>
</dbReference>
<dbReference type="STRING" id="6239.W08E12.1.1"/>
<dbReference type="PaxDb" id="6239-W08E12.1"/>
<dbReference type="EnsemblMetazoa" id="W08E12.1.1">
    <property type="protein sequence ID" value="W08E12.1.1"/>
    <property type="gene ID" value="WBGene00021082"/>
</dbReference>
<dbReference type="GeneID" id="177099"/>
<dbReference type="KEGG" id="cel:CELE_W08E12.1"/>
<dbReference type="UCSC" id="W08E12.1">
    <property type="organism name" value="c. elegans"/>
</dbReference>
<dbReference type="AGR" id="WB:WBGene00021082"/>
<dbReference type="CTD" id="177099"/>
<dbReference type="WormBase" id="W08E12.1">
    <property type="protein sequence ID" value="CE21280"/>
    <property type="gene ID" value="WBGene00021082"/>
    <property type="gene designation" value="zip-11"/>
</dbReference>
<dbReference type="eggNOG" id="KOG4571">
    <property type="taxonomic scope" value="Eukaryota"/>
</dbReference>
<dbReference type="HOGENOM" id="CLU_1241080_0_0_1"/>
<dbReference type="InParanoid" id="Q9N5A8"/>
<dbReference type="OMA" id="EIPHEQS"/>
<dbReference type="OrthoDB" id="5847285at2759"/>
<dbReference type="PRO" id="PR:Q9N5A8"/>
<dbReference type="Proteomes" id="UP000001940">
    <property type="component" value="Chromosome IV"/>
</dbReference>
<dbReference type="Bgee" id="WBGene00021082">
    <property type="expression patterns" value="Expressed in germ line (C elegans) and 4 other cell types or tissues"/>
</dbReference>
<dbReference type="GO" id="GO:0005634">
    <property type="term" value="C:nucleus"/>
    <property type="evidence" value="ECO:0000314"/>
    <property type="project" value="UniProtKB"/>
</dbReference>
<dbReference type="GO" id="GO:0000981">
    <property type="term" value="F:DNA-binding transcription factor activity, RNA polymerase II-specific"/>
    <property type="evidence" value="ECO:0000318"/>
    <property type="project" value="GO_Central"/>
</dbReference>
<dbReference type="GO" id="GO:0140297">
    <property type="term" value="F:DNA-binding transcription factor binding"/>
    <property type="evidence" value="ECO:0000353"/>
    <property type="project" value="UniProtKB"/>
</dbReference>
<dbReference type="GO" id="GO:0000978">
    <property type="term" value="F:RNA polymerase II cis-regulatory region sequence-specific DNA binding"/>
    <property type="evidence" value="ECO:0000318"/>
    <property type="project" value="GO_Central"/>
</dbReference>
<dbReference type="GO" id="GO:0050829">
    <property type="term" value="P:defense response to Gram-negative bacterium"/>
    <property type="evidence" value="ECO:0000315"/>
    <property type="project" value="UniProtKB"/>
</dbReference>
<dbReference type="GO" id="GO:0006357">
    <property type="term" value="P:regulation of transcription by RNA polymerase II"/>
    <property type="evidence" value="ECO:0000318"/>
    <property type="project" value="GO_Central"/>
</dbReference>
<dbReference type="CDD" id="cd14692">
    <property type="entry name" value="bZIP_ATF4"/>
    <property type="match status" value="1"/>
</dbReference>
<dbReference type="FunFam" id="1.20.5.170:FF:000158">
    <property type="entry name" value="BZIP transcription factor family"/>
    <property type="match status" value="1"/>
</dbReference>
<dbReference type="Gene3D" id="1.20.5.170">
    <property type="match status" value="1"/>
</dbReference>
<dbReference type="InterPro" id="IPR004827">
    <property type="entry name" value="bZIP"/>
</dbReference>
<dbReference type="InterPro" id="IPR046347">
    <property type="entry name" value="bZIP_sf"/>
</dbReference>
<dbReference type="Pfam" id="PF00170">
    <property type="entry name" value="bZIP_1"/>
    <property type="match status" value="1"/>
</dbReference>
<dbReference type="SMART" id="SM00338">
    <property type="entry name" value="BRLZ"/>
    <property type="match status" value="1"/>
</dbReference>
<dbReference type="SUPFAM" id="SSF57959">
    <property type="entry name" value="Leucine zipper domain"/>
    <property type="match status" value="1"/>
</dbReference>
<dbReference type="PROSITE" id="PS50217">
    <property type="entry name" value="BZIP"/>
    <property type="match status" value="1"/>
</dbReference>
<dbReference type="PROSITE" id="PS00036">
    <property type="entry name" value="BZIP_BASIC"/>
    <property type="match status" value="1"/>
</dbReference>
<gene>
    <name evidence="7" type="primary">zip-11</name>
    <name evidence="7" type="ORF">W08E12.1</name>
</gene>
<reference evidence="6" key="1">
    <citation type="journal article" date="1998" name="Science">
        <title>Genome sequence of the nematode C. elegans: a platform for investigating biology.</title>
        <authorList>
            <consortium name="The C. elegans sequencing consortium"/>
        </authorList>
    </citation>
    <scope>NUCLEOTIDE SEQUENCE [LARGE SCALE GENOMIC DNA]</scope>
    <source>
        <strain evidence="6">Bristol N2</strain>
    </source>
</reference>
<reference evidence="5" key="2">
    <citation type="journal article" date="2021" name="Front. Immunol.">
        <title>The bZIP Transcription Factor ZIP-11 Is Required for the Innate Immune Regulation in Caenorhabditis elegans.</title>
        <authorList>
            <person name="Zheng Z."/>
            <person name="Aihemaiti Y."/>
            <person name="Liu J."/>
            <person name="Afridi M.I."/>
            <person name="Yang S."/>
            <person name="Zhang X."/>
            <person name="Xu Y."/>
            <person name="Chen C."/>
            <person name="Tu H."/>
        </authorList>
    </citation>
    <scope>FUNCTION</scope>
    <scope>INTERACTION WITH CEBP-2</scope>
    <scope>SUBCELLULAR LOCATION</scope>
    <scope>DEVELOPMENTAL STAGE</scope>
    <scope>INDUCTION</scope>
    <scope>DISRUPTION PHENOTYPE</scope>
</reference>
<organism evidence="6">
    <name type="scientific">Caenorhabditis elegans</name>
    <dbReference type="NCBI Taxonomy" id="6239"/>
    <lineage>
        <taxon>Eukaryota</taxon>
        <taxon>Metazoa</taxon>
        <taxon>Ecdysozoa</taxon>
        <taxon>Nematoda</taxon>
        <taxon>Chromadorea</taxon>
        <taxon>Rhabditida</taxon>
        <taxon>Rhabditina</taxon>
        <taxon>Rhabditomorpha</taxon>
        <taxon>Rhabditoidea</taxon>
        <taxon>Rhabditidae</taxon>
        <taxon>Peloderinae</taxon>
        <taxon>Caenorhabditis</taxon>
    </lineage>
</organism>
<comment type="function">
    <text evidence="1 3">Transcription factor (By similarity). Involved in modulating innate immune response pathways, acting to promote resistance against infection by Gram-negative bacterium P.aeruginosa strain PA14 (PubMed:34804026). May act as part of a feedback regulatory loop with the pmk-1/p38 MAPK pathway (PubMed:34804026). May also function in concert with CCAAT/enhancer-binding protein cebp-2 to mediate immune responses, independently of the pmk-1/p38 MAPK pathway (PubMed:34804026).</text>
</comment>
<comment type="subunit">
    <text evidence="3">Interacts with CCAAT/enhancer-binding protein cebp-2.</text>
</comment>
<comment type="interaction">
    <interactant intactId="EBI-6740132">
        <id>Q9N5A8</id>
    </interactant>
    <interactant intactId="EBI-2914231">
        <id>Q8IG69</id>
        <label>cebp-2</label>
    </interactant>
    <organismsDiffer>false</organismsDiffer>
    <experiments>3</experiments>
</comment>
<comment type="subcellular location">
    <subcellularLocation>
        <location evidence="2 3">Nucleus</location>
    </subcellularLocation>
</comment>
<comment type="developmental stage">
    <text evidence="3">Expressed in intestine, pharynx, and hypodermis at larval stage L4.</text>
</comment>
<comment type="induction">
    <text evidence="3">By exposure to the Gram-negative bacterium P.aeruginosa strain PA14.</text>
</comment>
<comment type="disruption phenotype">
    <text evidence="3">RNAi-mediated knockdown targeted to the intestine, but not to neurons, hypodermis, muscle or germline, reduced the resistance to infection by the Gram-positive bacterium P.aeruginosa strain PA14 (PubMed:34804026). Reduces expression of pmk-1 pathway dependent genes, such as systemic stress signaling mediator sysm-1 and infection response gene irg-4 (PubMed:34804026).</text>
</comment>
<comment type="similarity">
    <text evidence="5">Belongs to the bZIP family.</text>
</comment>
<name>ZIP11_CAEEL</name>
<feature type="chain" id="PRO_0000455157" description="Transcription factor zip-11">
    <location>
        <begin position="1"/>
        <end position="228"/>
    </location>
</feature>
<feature type="domain" description="bZIP" evidence="2">
    <location>
        <begin position="166"/>
        <end position="224"/>
    </location>
</feature>
<feature type="region of interest" description="Basic motif" evidence="2">
    <location>
        <begin position="166"/>
        <end position="202"/>
    </location>
</feature>
<feature type="region of interest" description="Leucine-zipper" evidence="2">
    <location>
        <begin position="203"/>
        <end position="210"/>
    </location>
</feature>
<evidence type="ECO:0000250" key="1">
    <source>
        <dbReference type="UniProtKB" id="P18848"/>
    </source>
</evidence>
<evidence type="ECO:0000255" key="2">
    <source>
        <dbReference type="PROSITE-ProRule" id="PRU00978"/>
    </source>
</evidence>
<evidence type="ECO:0000269" key="3">
    <source>
    </source>
</evidence>
<evidence type="ECO:0000303" key="4">
    <source>
    </source>
</evidence>
<evidence type="ECO:0000305" key="5"/>
<evidence type="ECO:0000312" key="6">
    <source>
        <dbReference type="Proteomes" id="UP000001940"/>
    </source>
</evidence>
<evidence type="ECO:0000312" key="7">
    <source>
        <dbReference type="WormBase" id="W08E12.1"/>
    </source>
</evidence>
<keyword id="KW-0238">DNA-binding</keyword>
<keyword id="KW-0539">Nucleus</keyword>
<keyword id="KW-1185">Reference proteome</keyword>
<keyword id="KW-0804">Transcription</keyword>
<keyword id="KW-0805">Transcription regulation</keyword>
<sequence>MWPPNAENNHCNYSYHEHAELNPHDHYHHHHYPHSSVHHTECYQTLSCPSDLPVETSYYNSVPPSYQDLGQTDLSPQFWCAEVDCVHERCSTKEIPHEQSKIFEEISKECDHIMNSAGDCEKCQVEHENGAQEAIPINDLVDIVMQTVDNLKKEGSSNDETKLLSRKRQQNKVAAARYRDKQKAKWQDLLDQLEAEEDRNQRLKLQAGHLEKEVAEMRQAFLAKLAKK</sequence>
<proteinExistence type="evidence at protein level"/>